<keyword id="KW-0067">ATP-binding</keyword>
<keyword id="KW-0119">Carbohydrate metabolism</keyword>
<keyword id="KW-0418">Kinase</keyword>
<keyword id="KW-0479">Metal-binding</keyword>
<keyword id="KW-0547">Nucleotide-binding</keyword>
<keyword id="KW-1185">Reference proteome</keyword>
<keyword id="KW-0808">Transferase</keyword>
<keyword id="KW-0862">Zinc</keyword>
<gene>
    <name evidence="1" type="primary">nanK</name>
    <name type="ordered locus">STM3336</name>
</gene>
<protein>
    <recommendedName>
        <fullName evidence="1">N-acetylmannosamine kinase</fullName>
        <ecNumber evidence="1">2.7.1.60</ecNumber>
    </recommendedName>
    <alternativeName>
        <fullName evidence="1">ManNAc kinase</fullName>
    </alternativeName>
    <alternativeName>
        <fullName evidence="1">N-acetyl-D-mannosamine kinase</fullName>
    </alternativeName>
</protein>
<sequence length="291" mass="30078">MTTLAIDIGGTKLAAALIDNNLRISQRRELPTPASKTPDALREALKALVEPLRAEARQVAIASTGIIQEGMLLALNPHNLGGLLHFPLVQTLEAIAGLPTLAVNDAQAAAWAEYHALPDDIRDMVFITVSTGVGGGVVCDGKLLTGKGGLAGHLGHTLADPHGPVCGCGRVGCVEAIASGRGMAAAARDDLAGCDAKTLFIRAGEGHQQARHLVSQSAQVIARMIADVKATTDCQCVVIGGSVGLAEGYLEQVRAFLMQEPAPYHVALSAARYRHDAGLLGAALLAQGDTL</sequence>
<evidence type="ECO:0000255" key="1">
    <source>
        <dbReference type="HAMAP-Rule" id="MF_01234"/>
    </source>
</evidence>
<feature type="chain" id="PRO_0000095702" description="N-acetylmannosamine kinase">
    <location>
        <begin position="1"/>
        <end position="291"/>
    </location>
</feature>
<feature type="binding site" evidence="1">
    <location>
        <begin position="5"/>
        <end position="12"/>
    </location>
    <ligand>
        <name>ATP</name>
        <dbReference type="ChEBI" id="CHEBI:30616"/>
    </ligand>
</feature>
<feature type="binding site" evidence="1">
    <location>
        <begin position="132"/>
        <end position="139"/>
    </location>
    <ligand>
        <name>ATP</name>
        <dbReference type="ChEBI" id="CHEBI:30616"/>
    </ligand>
</feature>
<feature type="binding site" evidence="1">
    <location>
        <position position="156"/>
    </location>
    <ligand>
        <name>Zn(2+)</name>
        <dbReference type="ChEBI" id="CHEBI:29105"/>
    </ligand>
</feature>
<feature type="binding site" evidence="1">
    <location>
        <position position="166"/>
    </location>
    <ligand>
        <name>Zn(2+)</name>
        <dbReference type="ChEBI" id="CHEBI:29105"/>
    </ligand>
</feature>
<feature type="binding site" evidence="1">
    <location>
        <position position="168"/>
    </location>
    <ligand>
        <name>Zn(2+)</name>
        <dbReference type="ChEBI" id="CHEBI:29105"/>
    </ligand>
</feature>
<feature type="binding site" evidence="1">
    <location>
        <position position="173"/>
    </location>
    <ligand>
        <name>Zn(2+)</name>
        <dbReference type="ChEBI" id="CHEBI:29105"/>
    </ligand>
</feature>
<comment type="function">
    <text evidence="1">Catalyzes the phosphorylation of N-acetylmannosamine (ManNAc) to ManNAc-6-P.</text>
</comment>
<comment type="catalytic activity">
    <reaction evidence="1">
        <text>an N-acyl-D-mannosamine + ATP = an N-acyl-D-mannosamine 6-phosphate + ADP + H(+)</text>
        <dbReference type="Rhea" id="RHEA:23832"/>
        <dbReference type="ChEBI" id="CHEBI:15378"/>
        <dbReference type="ChEBI" id="CHEBI:16062"/>
        <dbReference type="ChEBI" id="CHEBI:30616"/>
        <dbReference type="ChEBI" id="CHEBI:57666"/>
        <dbReference type="ChEBI" id="CHEBI:456216"/>
        <dbReference type="EC" id="2.7.1.60"/>
    </reaction>
</comment>
<comment type="pathway">
    <text evidence="1">Amino-sugar metabolism; N-acetylneuraminate degradation; D-fructose 6-phosphate from N-acetylneuraminate: step 2/5.</text>
</comment>
<comment type="subunit">
    <text evidence="1">Homodimer.</text>
</comment>
<comment type="similarity">
    <text evidence="1">Belongs to the ROK (NagC/XylR) family. NanK subfamily.</text>
</comment>
<dbReference type="EC" id="2.7.1.60" evidence="1"/>
<dbReference type="EMBL" id="AE006468">
    <property type="protein sequence ID" value="AAL22205.1"/>
    <property type="molecule type" value="Genomic_DNA"/>
</dbReference>
<dbReference type="RefSeq" id="NP_462246.1">
    <property type="nucleotide sequence ID" value="NC_003197.2"/>
</dbReference>
<dbReference type="RefSeq" id="WP_000208976.1">
    <property type="nucleotide sequence ID" value="NC_003197.2"/>
</dbReference>
<dbReference type="SMR" id="Q8ZLQ8"/>
<dbReference type="STRING" id="99287.STM3336"/>
<dbReference type="PaxDb" id="99287-STM3336"/>
<dbReference type="GeneID" id="1254859"/>
<dbReference type="KEGG" id="stm:STM3336"/>
<dbReference type="PATRIC" id="fig|99287.12.peg.3537"/>
<dbReference type="HOGENOM" id="CLU_036604_0_4_6"/>
<dbReference type="OMA" id="PICGCGR"/>
<dbReference type="PhylomeDB" id="Q8ZLQ8"/>
<dbReference type="BioCyc" id="MetaCyc:MONOMER-13105"/>
<dbReference type="BioCyc" id="SENT99287:STM3336-MONOMER"/>
<dbReference type="UniPathway" id="UPA00629">
    <property type="reaction ID" value="UER00681"/>
</dbReference>
<dbReference type="Proteomes" id="UP000001014">
    <property type="component" value="Chromosome"/>
</dbReference>
<dbReference type="GO" id="GO:0005524">
    <property type="term" value="F:ATP binding"/>
    <property type="evidence" value="ECO:0007669"/>
    <property type="project" value="UniProtKB-UniRule"/>
</dbReference>
<dbReference type="GO" id="GO:0009384">
    <property type="term" value="F:N-acylmannosamine kinase activity"/>
    <property type="evidence" value="ECO:0000318"/>
    <property type="project" value="GO_Central"/>
</dbReference>
<dbReference type="GO" id="GO:0008270">
    <property type="term" value="F:zinc ion binding"/>
    <property type="evidence" value="ECO:0007669"/>
    <property type="project" value="UniProtKB-UniRule"/>
</dbReference>
<dbReference type="GO" id="GO:0019262">
    <property type="term" value="P:N-acetylneuraminate catabolic process"/>
    <property type="evidence" value="ECO:0000318"/>
    <property type="project" value="GO_Central"/>
</dbReference>
<dbReference type="FunFam" id="3.30.420.40:FF:000062">
    <property type="entry name" value="N-acetylmannosamine kinase"/>
    <property type="match status" value="1"/>
</dbReference>
<dbReference type="FunFam" id="3.30.420.40:FF:000063">
    <property type="entry name" value="N-acetylmannosamine kinase"/>
    <property type="match status" value="1"/>
</dbReference>
<dbReference type="Gene3D" id="3.30.420.40">
    <property type="match status" value="2"/>
</dbReference>
<dbReference type="HAMAP" id="MF_01234">
    <property type="entry name" value="ManNAc_kinase"/>
    <property type="match status" value="1"/>
</dbReference>
<dbReference type="InterPro" id="IPR043129">
    <property type="entry name" value="ATPase_NBD"/>
</dbReference>
<dbReference type="InterPro" id="IPR023945">
    <property type="entry name" value="ManNAc_kinase_bac"/>
</dbReference>
<dbReference type="InterPro" id="IPR000600">
    <property type="entry name" value="ROK"/>
</dbReference>
<dbReference type="InterPro" id="IPR049874">
    <property type="entry name" value="ROK_cs"/>
</dbReference>
<dbReference type="NCBIfam" id="NF047821">
    <property type="entry name" value="NactlManKinNanK"/>
    <property type="match status" value="1"/>
</dbReference>
<dbReference type="NCBIfam" id="NF003461">
    <property type="entry name" value="PRK05082.1"/>
    <property type="match status" value="1"/>
</dbReference>
<dbReference type="PANTHER" id="PTHR18964:SF169">
    <property type="entry name" value="N-ACETYLMANNOSAMINE KINASE"/>
    <property type="match status" value="1"/>
</dbReference>
<dbReference type="PANTHER" id="PTHR18964">
    <property type="entry name" value="ROK (REPRESSOR, ORF, KINASE) FAMILY"/>
    <property type="match status" value="1"/>
</dbReference>
<dbReference type="Pfam" id="PF00480">
    <property type="entry name" value="ROK"/>
    <property type="match status" value="1"/>
</dbReference>
<dbReference type="SUPFAM" id="SSF53067">
    <property type="entry name" value="Actin-like ATPase domain"/>
    <property type="match status" value="1"/>
</dbReference>
<dbReference type="PROSITE" id="PS01125">
    <property type="entry name" value="ROK"/>
    <property type="match status" value="1"/>
</dbReference>
<accession>Q8ZLQ8</accession>
<proteinExistence type="inferred from homology"/>
<reference key="1">
    <citation type="journal article" date="2001" name="Nature">
        <title>Complete genome sequence of Salmonella enterica serovar Typhimurium LT2.</title>
        <authorList>
            <person name="McClelland M."/>
            <person name="Sanderson K.E."/>
            <person name="Spieth J."/>
            <person name="Clifton S.W."/>
            <person name="Latreille P."/>
            <person name="Courtney L."/>
            <person name="Porwollik S."/>
            <person name="Ali J."/>
            <person name="Dante M."/>
            <person name="Du F."/>
            <person name="Hou S."/>
            <person name="Layman D."/>
            <person name="Leonard S."/>
            <person name="Nguyen C."/>
            <person name="Scott K."/>
            <person name="Holmes A."/>
            <person name="Grewal N."/>
            <person name="Mulvaney E."/>
            <person name="Ryan E."/>
            <person name="Sun H."/>
            <person name="Florea L."/>
            <person name="Miller W."/>
            <person name="Stoneking T."/>
            <person name="Nhan M."/>
            <person name="Waterston R."/>
            <person name="Wilson R.K."/>
        </authorList>
    </citation>
    <scope>NUCLEOTIDE SEQUENCE [LARGE SCALE GENOMIC DNA]</scope>
    <source>
        <strain>LT2 / SGSC1412 / ATCC 700720</strain>
    </source>
</reference>
<name>NANK_SALTY</name>
<organism>
    <name type="scientific">Salmonella typhimurium (strain LT2 / SGSC1412 / ATCC 700720)</name>
    <dbReference type="NCBI Taxonomy" id="99287"/>
    <lineage>
        <taxon>Bacteria</taxon>
        <taxon>Pseudomonadati</taxon>
        <taxon>Pseudomonadota</taxon>
        <taxon>Gammaproteobacteria</taxon>
        <taxon>Enterobacterales</taxon>
        <taxon>Enterobacteriaceae</taxon>
        <taxon>Salmonella</taxon>
    </lineage>
</organism>